<evidence type="ECO:0000255" key="1">
    <source>
        <dbReference type="HAMAP-Rule" id="MF_01537"/>
    </source>
</evidence>
<protein>
    <recommendedName>
        <fullName evidence="1">Pyrimidine/purine nucleoside phosphorylase</fullName>
        <ecNumber evidence="1">2.4.2.1</ecNumber>
        <ecNumber evidence="1">2.4.2.2</ecNumber>
    </recommendedName>
    <alternativeName>
        <fullName evidence="1">Adenosine phosphorylase</fullName>
    </alternativeName>
    <alternativeName>
        <fullName evidence="1">Cytidine phosphorylase</fullName>
    </alternativeName>
    <alternativeName>
        <fullName evidence="1">Guanosine phosphorylase</fullName>
    </alternativeName>
    <alternativeName>
        <fullName evidence="1">Inosine phosphorylase</fullName>
    </alternativeName>
    <alternativeName>
        <fullName evidence="1">Thymidine phosphorylase</fullName>
    </alternativeName>
    <alternativeName>
        <fullName evidence="1">Uridine phosphorylase</fullName>
    </alternativeName>
    <alternativeName>
        <fullName evidence="1">Xanthosine phosphorylase</fullName>
    </alternativeName>
</protein>
<organism>
    <name type="scientific">Escherichia coli (strain K12 / DH10B)</name>
    <dbReference type="NCBI Taxonomy" id="316385"/>
    <lineage>
        <taxon>Bacteria</taxon>
        <taxon>Pseudomonadati</taxon>
        <taxon>Pseudomonadota</taxon>
        <taxon>Gammaproteobacteria</taxon>
        <taxon>Enterobacterales</taxon>
        <taxon>Enterobacteriaceae</taxon>
        <taxon>Escherichia</taxon>
    </lineage>
</organism>
<comment type="function">
    <text evidence="1">Catalyzes the phosphorolysis of diverse nucleosides, yielding D-ribose 1-phosphate and the respective free bases. Can use uridine, adenosine, guanosine, cytidine, thymidine, inosine and xanthosine as substrates. Also catalyzes the reverse reactions.</text>
</comment>
<comment type="catalytic activity">
    <reaction evidence="1">
        <text>a purine D-ribonucleoside + phosphate = a purine nucleobase + alpha-D-ribose 1-phosphate</text>
        <dbReference type="Rhea" id="RHEA:19805"/>
        <dbReference type="ChEBI" id="CHEBI:26386"/>
        <dbReference type="ChEBI" id="CHEBI:43474"/>
        <dbReference type="ChEBI" id="CHEBI:57720"/>
        <dbReference type="ChEBI" id="CHEBI:142355"/>
        <dbReference type="EC" id="2.4.2.1"/>
    </reaction>
</comment>
<comment type="catalytic activity">
    <reaction evidence="1">
        <text>adenosine + phosphate = alpha-D-ribose 1-phosphate + adenine</text>
        <dbReference type="Rhea" id="RHEA:27642"/>
        <dbReference type="ChEBI" id="CHEBI:16335"/>
        <dbReference type="ChEBI" id="CHEBI:16708"/>
        <dbReference type="ChEBI" id="CHEBI:43474"/>
        <dbReference type="ChEBI" id="CHEBI:57720"/>
        <dbReference type="EC" id="2.4.2.1"/>
    </reaction>
</comment>
<comment type="catalytic activity">
    <reaction evidence="1">
        <text>cytidine + phosphate = cytosine + alpha-D-ribose 1-phosphate</text>
        <dbReference type="Rhea" id="RHEA:52540"/>
        <dbReference type="ChEBI" id="CHEBI:16040"/>
        <dbReference type="ChEBI" id="CHEBI:17562"/>
        <dbReference type="ChEBI" id="CHEBI:43474"/>
        <dbReference type="ChEBI" id="CHEBI:57720"/>
        <dbReference type="EC" id="2.4.2.2"/>
    </reaction>
</comment>
<comment type="catalytic activity">
    <reaction evidence="1">
        <text>guanosine + phosphate = alpha-D-ribose 1-phosphate + guanine</text>
        <dbReference type="Rhea" id="RHEA:13233"/>
        <dbReference type="ChEBI" id="CHEBI:16235"/>
        <dbReference type="ChEBI" id="CHEBI:16750"/>
        <dbReference type="ChEBI" id="CHEBI:43474"/>
        <dbReference type="ChEBI" id="CHEBI:57720"/>
        <dbReference type="EC" id="2.4.2.1"/>
    </reaction>
</comment>
<comment type="catalytic activity">
    <reaction evidence="1">
        <text>inosine + phosphate = alpha-D-ribose 1-phosphate + hypoxanthine</text>
        <dbReference type="Rhea" id="RHEA:27646"/>
        <dbReference type="ChEBI" id="CHEBI:17368"/>
        <dbReference type="ChEBI" id="CHEBI:17596"/>
        <dbReference type="ChEBI" id="CHEBI:43474"/>
        <dbReference type="ChEBI" id="CHEBI:57720"/>
        <dbReference type="EC" id="2.4.2.1"/>
    </reaction>
</comment>
<comment type="catalytic activity">
    <reaction evidence="1">
        <text>thymidine + phosphate = 2-deoxy-alpha-D-ribose 1-phosphate + thymine</text>
        <dbReference type="Rhea" id="RHEA:16037"/>
        <dbReference type="ChEBI" id="CHEBI:17748"/>
        <dbReference type="ChEBI" id="CHEBI:17821"/>
        <dbReference type="ChEBI" id="CHEBI:43474"/>
        <dbReference type="ChEBI" id="CHEBI:57259"/>
        <dbReference type="EC" id="2.4.2.2"/>
    </reaction>
</comment>
<comment type="catalytic activity">
    <reaction evidence="1">
        <text>uridine + phosphate = alpha-D-ribose 1-phosphate + uracil</text>
        <dbReference type="Rhea" id="RHEA:24388"/>
        <dbReference type="ChEBI" id="CHEBI:16704"/>
        <dbReference type="ChEBI" id="CHEBI:17568"/>
        <dbReference type="ChEBI" id="CHEBI:43474"/>
        <dbReference type="ChEBI" id="CHEBI:57720"/>
        <dbReference type="EC" id="2.4.2.2"/>
    </reaction>
</comment>
<comment type="catalytic activity">
    <reaction evidence="1">
        <text>xanthosine + phosphate = alpha-D-ribose 1-phosphate + xanthine</text>
        <dbReference type="Rhea" id="RHEA:27638"/>
        <dbReference type="ChEBI" id="CHEBI:17712"/>
        <dbReference type="ChEBI" id="CHEBI:18107"/>
        <dbReference type="ChEBI" id="CHEBI:43474"/>
        <dbReference type="ChEBI" id="CHEBI:57720"/>
        <dbReference type="EC" id="2.4.2.1"/>
    </reaction>
</comment>
<comment type="similarity">
    <text evidence="1">Belongs to the nucleoside phosphorylase PpnP family.</text>
</comment>
<gene>
    <name evidence="1" type="primary">ppnP</name>
    <name type="ordered locus">ECDH10B_0348</name>
</gene>
<accession>B1XEY0</accession>
<keyword id="KW-0328">Glycosyltransferase</keyword>
<keyword id="KW-0808">Transferase</keyword>
<name>PPNP_ECODH</name>
<proteinExistence type="inferred from homology"/>
<sequence>MLQSNEYFSGKVKSIGFSSSSTGRASVGVMVEGEYTFSTAEPEEMTVISGALNVLLPDATDWQVYEAGSVFNVPGHSEFHLQVAEPTSYLCRYL</sequence>
<dbReference type="EC" id="2.4.2.1" evidence="1"/>
<dbReference type="EC" id="2.4.2.2" evidence="1"/>
<dbReference type="EMBL" id="CP000948">
    <property type="protein sequence ID" value="ACB01520.1"/>
    <property type="molecule type" value="Genomic_DNA"/>
</dbReference>
<dbReference type="RefSeq" id="WP_000941942.1">
    <property type="nucleotide sequence ID" value="NC_010473.1"/>
</dbReference>
<dbReference type="SMR" id="B1XEY0"/>
<dbReference type="GeneID" id="93777070"/>
<dbReference type="KEGG" id="ecd:ECDH10B_0348"/>
<dbReference type="HOGENOM" id="CLU_157874_0_0_6"/>
<dbReference type="GO" id="GO:0005829">
    <property type="term" value="C:cytosol"/>
    <property type="evidence" value="ECO:0007669"/>
    <property type="project" value="TreeGrafter"/>
</dbReference>
<dbReference type="GO" id="GO:0047975">
    <property type="term" value="F:guanosine phosphorylase activity"/>
    <property type="evidence" value="ECO:0007669"/>
    <property type="project" value="UniProtKB-EC"/>
</dbReference>
<dbReference type="GO" id="GO:0004731">
    <property type="term" value="F:purine-nucleoside phosphorylase activity"/>
    <property type="evidence" value="ECO:0007669"/>
    <property type="project" value="UniProtKB-UniRule"/>
</dbReference>
<dbReference type="GO" id="GO:0009032">
    <property type="term" value="F:thymidine phosphorylase activity"/>
    <property type="evidence" value="ECO:0007669"/>
    <property type="project" value="UniProtKB-EC"/>
</dbReference>
<dbReference type="GO" id="GO:0004850">
    <property type="term" value="F:uridine phosphorylase activity"/>
    <property type="evidence" value="ECO:0007669"/>
    <property type="project" value="UniProtKB-EC"/>
</dbReference>
<dbReference type="CDD" id="cd20296">
    <property type="entry name" value="cupin_PpnP-like"/>
    <property type="match status" value="1"/>
</dbReference>
<dbReference type="FunFam" id="2.60.120.10:FF:000016">
    <property type="entry name" value="Pyrimidine/purine nucleoside phosphorylase"/>
    <property type="match status" value="1"/>
</dbReference>
<dbReference type="Gene3D" id="2.60.120.10">
    <property type="entry name" value="Jelly Rolls"/>
    <property type="match status" value="1"/>
</dbReference>
<dbReference type="HAMAP" id="MF_01537">
    <property type="entry name" value="Nucleos_phosphorylase_PpnP"/>
    <property type="match status" value="1"/>
</dbReference>
<dbReference type="InterPro" id="IPR009664">
    <property type="entry name" value="Ppnp"/>
</dbReference>
<dbReference type="InterPro" id="IPR014710">
    <property type="entry name" value="RmlC-like_jellyroll"/>
</dbReference>
<dbReference type="InterPro" id="IPR011051">
    <property type="entry name" value="RmlC_Cupin_sf"/>
</dbReference>
<dbReference type="NCBIfam" id="NF007875">
    <property type="entry name" value="PRK10579.1"/>
    <property type="match status" value="1"/>
</dbReference>
<dbReference type="PANTHER" id="PTHR36540">
    <property type="entry name" value="PYRIMIDINE/PURINE NUCLEOSIDE PHOSPHORYLASE"/>
    <property type="match status" value="1"/>
</dbReference>
<dbReference type="PANTHER" id="PTHR36540:SF1">
    <property type="entry name" value="PYRIMIDINE_PURINE NUCLEOSIDE PHOSPHORYLASE"/>
    <property type="match status" value="1"/>
</dbReference>
<dbReference type="Pfam" id="PF06865">
    <property type="entry name" value="Ppnp"/>
    <property type="match status" value="1"/>
</dbReference>
<dbReference type="SUPFAM" id="SSF51182">
    <property type="entry name" value="RmlC-like cupins"/>
    <property type="match status" value="1"/>
</dbReference>
<reference key="1">
    <citation type="journal article" date="2008" name="J. Bacteriol.">
        <title>The complete genome sequence of Escherichia coli DH10B: insights into the biology of a laboratory workhorse.</title>
        <authorList>
            <person name="Durfee T."/>
            <person name="Nelson R."/>
            <person name="Baldwin S."/>
            <person name="Plunkett G. III"/>
            <person name="Burland V."/>
            <person name="Mau B."/>
            <person name="Petrosino J.F."/>
            <person name="Qin X."/>
            <person name="Muzny D.M."/>
            <person name="Ayele M."/>
            <person name="Gibbs R.A."/>
            <person name="Csorgo B."/>
            <person name="Posfai G."/>
            <person name="Weinstock G.M."/>
            <person name="Blattner F.R."/>
        </authorList>
    </citation>
    <scope>NUCLEOTIDE SEQUENCE [LARGE SCALE GENOMIC DNA]</scope>
    <source>
        <strain>K12 / DH10B</strain>
    </source>
</reference>
<feature type="chain" id="PRO_1000198657" description="Pyrimidine/purine nucleoside phosphorylase">
    <location>
        <begin position="1"/>
        <end position="94"/>
    </location>
</feature>